<accession>A7H4T8</accession>
<gene>
    <name evidence="1" type="primary">acpP</name>
    <name type="ordered locus">JJD26997_1496</name>
</gene>
<feature type="chain" id="PRO_1000066582" description="Acyl carrier protein">
    <location>
        <begin position="1"/>
        <end position="77"/>
    </location>
</feature>
<feature type="domain" description="Carrier" evidence="2">
    <location>
        <begin position="1"/>
        <end position="76"/>
    </location>
</feature>
<feature type="modified residue" description="O-(pantetheine 4'-phosphoryl)serine" evidence="2">
    <location>
        <position position="36"/>
    </location>
</feature>
<reference key="1">
    <citation type="submission" date="2007-07" db="EMBL/GenBank/DDBJ databases">
        <title>Complete genome sequence of Campylobacter jejuni subsp doylei 269.97 isolated from human blood.</title>
        <authorList>
            <person name="Fouts D.E."/>
            <person name="Mongodin E.F."/>
            <person name="Puiu D."/>
            <person name="Sebastian Y."/>
            <person name="Miller W.G."/>
            <person name="Mandrell R.E."/>
            <person name="Lastovica A.J."/>
            <person name="Nelson K.E."/>
        </authorList>
    </citation>
    <scope>NUCLEOTIDE SEQUENCE [LARGE SCALE GENOMIC DNA]</scope>
    <source>
        <strain>ATCC BAA-1458 / RM4099 / 269.97</strain>
    </source>
</reference>
<organism>
    <name type="scientific">Campylobacter jejuni subsp. doylei (strain ATCC BAA-1458 / RM4099 / 269.97)</name>
    <dbReference type="NCBI Taxonomy" id="360109"/>
    <lineage>
        <taxon>Bacteria</taxon>
        <taxon>Pseudomonadati</taxon>
        <taxon>Campylobacterota</taxon>
        <taxon>Epsilonproteobacteria</taxon>
        <taxon>Campylobacterales</taxon>
        <taxon>Campylobacteraceae</taxon>
        <taxon>Campylobacter</taxon>
    </lineage>
</organism>
<name>ACP_CAMJD</name>
<sequence length="77" mass="8570">MATFDDVKAVVAEQLSIDADAVKMESKIIEDLGADSLDVVELIMALEEKFEVEIPDSDAEKLIKIEDVVNYIDNLKK</sequence>
<proteinExistence type="inferred from homology"/>
<dbReference type="EMBL" id="CP000768">
    <property type="protein sequence ID" value="ABS43970.1"/>
    <property type="molecule type" value="Genomic_DNA"/>
</dbReference>
<dbReference type="SMR" id="A7H4T8"/>
<dbReference type="KEGG" id="cjd:JJD26997_1496"/>
<dbReference type="HOGENOM" id="CLU_108696_5_1_7"/>
<dbReference type="UniPathway" id="UPA00094"/>
<dbReference type="Proteomes" id="UP000002302">
    <property type="component" value="Chromosome"/>
</dbReference>
<dbReference type="GO" id="GO:0005829">
    <property type="term" value="C:cytosol"/>
    <property type="evidence" value="ECO:0007669"/>
    <property type="project" value="TreeGrafter"/>
</dbReference>
<dbReference type="GO" id="GO:0016020">
    <property type="term" value="C:membrane"/>
    <property type="evidence" value="ECO:0007669"/>
    <property type="project" value="GOC"/>
</dbReference>
<dbReference type="GO" id="GO:0000035">
    <property type="term" value="F:acyl binding"/>
    <property type="evidence" value="ECO:0007669"/>
    <property type="project" value="TreeGrafter"/>
</dbReference>
<dbReference type="GO" id="GO:0000036">
    <property type="term" value="F:acyl carrier activity"/>
    <property type="evidence" value="ECO:0007669"/>
    <property type="project" value="UniProtKB-UniRule"/>
</dbReference>
<dbReference type="GO" id="GO:0031177">
    <property type="term" value="F:phosphopantetheine binding"/>
    <property type="evidence" value="ECO:0007669"/>
    <property type="project" value="InterPro"/>
</dbReference>
<dbReference type="GO" id="GO:0009245">
    <property type="term" value="P:lipid A biosynthetic process"/>
    <property type="evidence" value="ECO:0007669"/>
    <property type="project" value="TreeGrafter"/>
</dbReference>
<dbReference type="Gene3D" id="1.10.1200.10">
    <property type="entry name" value="ACP-like"/>
    <property type="match status" value="1"/>
</dbReference>
<dbReference type="HAMAP" id="MF_01217">
    <property type="entry name" value="Acyl_carrier"/>
    <property type="match status" value="1"/>
</dbReference>
<dbReference type="InterPro" id="IPR003231">
    <property type="entry name" value="ACP"/>
</dbReference>
<dbReference type="InterPro" id="IPR036736">
    <property type="entry name" value="ACP-like_sf"/>
</dbReference>
<dbReference type="InterPro" id="IPR020806">
    <property type="entry name" value="PKS_PP-bd"/>
</dbReference>
<dbReference type="InterPro" id="IPR009081">
    <property type="entry name" value="PP-bd_ACP"/>
</dbReference>
<dbReference type="InterPro" id="IPR006162">
    <property type="entry name" value="Ppantetheine_attach_site"/>
</dbReference>
<dbReference type="NCBIfam" id="TIGR00517">
    <property type="entry name" value="acyl_carrier"/>
    <property type="match status" value="1"/>
</dbReference>
<dbReference type="NCBIfam" id="NF002148">
    <property type="entry name" value="PRK00982.1-2"/>
    <property type="match status" value="1"/>
</dbReference>
<dbReference type="NCBIfam" id="NF002150">
    <property type="entry name" value="PRK00982.1-4"/>
    <property type="match status" value="1"/>
</dbReference>
<dbReference type="PANTHER" id="PTHR20863">
    <property type="entry name" value="ACYL CARRIER PROTEIN"/>
    <property type="match status" value="1"/>
</dbReference>
<dbReference type="PANTHER" id="PTHR20863:SF76">
    <property type="entry name" value="CARRIER DOMAIN-CONTAINING PROTEIN"/>
    <property type="match status" value="1"/>
</dbReference>
<dbReference type="Pfam" id="PF00550">
    <property type="entry name" value="PP-binding"/>
    <property type="match status" value="1"/>
</dbReference>
<dbReference type="SMART" id="SM00823">
    <property type="entry name" value="PKS_PP"/>
    <property type="match status" value="1"/>
</dbReference>
<dbReference type="SUPFAM" id="SSF47336">
    <property type="entry name" value="ACP-like"/>
    <property type="match status" value="1"/>
</dbReference>
<dbReference type="PROSITE" id="PS50075">
    <property type="entry name" value="CARRIER"/>
    <property type="match status" value="1"/>
</dbReference>
<dbReference type="PROSITE" id="PS00012">
    <property type="entry name" value="PHOSPHOPANTETHEINE"/>
    <property type="match status" value="1"/>
</dbReference>
<comment type="function">
    <text evidence="1">Carrier of the growing fatty acid chain in fatty acid biosynthesis.</text>
</comment>
<comment type="pathway">
    <text evidence="1">Lipid metabolism; fatty acid biosynthesis.</text>
</comment>
<comment type="subcellular location">
    <subcellularLocation>
        <location evidence="1">Cytoplasm</location>
    </subcellularLocation>
</comment>
<comment type="PTM">
    <text evidence="1">4'-phosphopantetheine is transferred from CoA to a specific serine of apo-ACP by AcpS. This modification is essential for activity because fatty acids are bound in thioester linkage to the sulfhydryl of the prosthetic group.</text>
</comment>
<comment type="similarity">
    <text evidence="1">Belongs to the acyl carrier protein (ACP) family.</text>
</comment>
<evidence type="ECO:0000255" key="1">
    <source>
        <dbReference type="HAMAP-Rule" id="MF_01217"/>
    </source>
</evidence>
<evidence type="ECO:0000255" key="2">
    <source>
        <dbReference type="PROSITE-ProRule" id="PRU00258"/>
    </source>
</evidence>
<protein>
    <recommendedName>
        <fullName evidence="1">Acyl carrier protein</fullName>
        <shortName evidence="1">ACP</shortName>
    </recommendedName>
</protein>
<keyword id="KW-0963">Cytoplasm</keyword>
<keyword id="KW-0275">Fatty acid biosynthesis</keyword>
<keyword id="KW-0276">Fatty acid metabolism</keyword>
<keyword id="KW-0444">Lipid biosynthesis</keyword>
<keyword id="KW-0443">Lipid metabolism</keyword>
<keyword id="KW-0596">Phosphopantetheine</keyword>
<keyword id="KW-0597">Phosphoprotein</keyword>